<reference key="1">
    <citation type="journal article" date="1991" name="J. Mol. Evol.">
        <title>Evolution of the cytochrome b gene of mammals.</title>
        <authorList>
            <person name="Irwin D.M."/>
            <person name="Kocher T.D."/>
            <person name="Wilson A.C."/>
        </authorList>
    </citation>
    <scope>NUCLEOTIDE SEQUENCE [GENOMIC DNA]</scope>
</reference>
<organism>
    <name type="scientific">Equus grevyi</name>
    <name type="common">Grevy's zebra</name>
    <dbReference type="NCBI Taxonomy" id="9792"/>
    <lineage>
        <taxon>Eukaryota</taxon>
        <taxon>Metazoa</taxon>
        <taxon>Chordata</taxon>
        <taxon>Craniata</taxon>
        <taxon>Vertebrata</taxon>
        <taxon>Euteleostomi</taxon>
        <taxon>Mammalia</taxon>
        <taxon>Eutheria</taxon>
        <taxon>Laurasiatheria</taxon>
        <taxon>Perissodactyla</taxon>
        <taxon>Equidae</taxon>
        <taxon>Equus</taxon>
    </lineage>
</organism>
<dbReference type="EMBL" id="X56282">
    <property type="protein sequence ID" value="CAA39729.1"/>
    <property type="molecule type" value="Genomic_DNA"/>
</dbReference>
<dbReference type="PIR" id="S17410">
    <property type="entry name" value="S17410"/>
</dbReference>
<dbReference type="RefSeq" id="YP_007507189.1">
    <property type="nucleotide sequence ID" value="NC_020432.2"/>
</dbReference>
<dbReference type="SMR" id="P24956"/>
<dbReference type="GeneID" id="14675770"/>
<dbReference type="CTD" id="4519"/>
<dbReference type="GO" id="GO:0005743">
    <property type="term" value="C:mitochondrial inner membrane"/>
    <property type="evidence" value="ECO:0007669"/>
    <property type="project" value="UniProtKB-SubCell"/>
</dbReference>
<dbReference type="GO" id="GO:0045275">
    <property type="term" value="C:respiratory chain complex III"/>
    <property type="evidence" value="ECO:0007669"/>
    <property type="project" value="InterPro"/>
</dbReference>
<dbReference type="GO" id="GO:0046872">
    <property type="term" value="F:metal ion binding"/>
    <property type="evidence" value="ECO:0007669"/>
    <property type="project" value="UniProtKB-KW"/>
</dbReference>
<dbReference type="GO" id="GO:0008121">
    <property type="term" value="F:ubiquinol-cytochrome-c reductase activity"/>
    <property type="evidence" value="ECO:0007669"/>
    <property type="project" value="InterPro"/>
</dbReference>
<dbReference type="GO" id="GO:0006122">
    <property type="term" value="P:mitochondrial electron transport, ubiquinol to cytochrome c"/>
    <property type="evidence" value="ECO:0007669"/>
    <property type="project" value="TreeGrafter"/>
</dbReference>
<dbReference type="CDD" id="cd00290">
    <property type="entry name" value="cytochrome_b_C"/>
    <property type="match status" value="1"/>
</dbReference>
<dbReference type="CDD" id="cd00284">
    <property type="entry name" value="Cytochrome_b_N"/>
    <property type="match status" value="1"/>
</dbReference>
<dbReference type="FunFam" id="1.20.810.10:FF:000002">
    <property type="entry name" value="Cytochrome b"/>
    <property type="match status" value="1"/>
</dbReference>
<dbReference type="Gene3D" id="1.20.810.10">
    <property type="entry name" value="Cytochrome Bc1 Complex, Chain C"/>
    <property type="match status" value="1"/>
</dbReference>
<dbReference type="InterPro" id="IPR005798">
    <property type="entry name" value="Cyt_b/b6_C"/>
</dbReference>
<dbReference type="InterPro" id="IPR036150">
    <property type="entry name" value="Cyt_b/b6_C_sf"/>
</dbReference>
<dbReference type="InterPro" id="IPR005797">
    <property type="entry name" value="Cyt_b/b6_N"/>
</dbReference>
<dbReference type="InterPro" id="IPR027387">
    <property type="entry name" value="Cytb/b6-like_sf"/>
</dbReference>
<dbReference type="InterPro" id="IPR030689">
    <property type="entry name" value="Cytochrome_b"/>
</dbReference>
<dbReference type="InterPro" id="IPR048260">
    <property type="entry name" value="Cytochrome_b_C_euk/bac"/>
</dbReference>
<dbReference type="InterPro" id="IPR048259">
    <property type="entry name" value="Cytochrome_b_N_euk/bac"/>
</dbReference>
<dbReference type="InterPro" id="IPR016174">
    <property type="entry name" value="Di-haem_cyt_TM"/>
</dbReference>
<dbReference type="PANTHER" id="PTHR19271">
    <property type="entry name" value="CYTOCHROME B"/>
    <property type="match status" value="1"/>
</dbReference>
<dbReference type="PANTHER" id="PTHR19271:SF16">
    <property type="entry name" value="CYTOCHROME B"/>
    <property type="match status" value="1"/>
</dbReference>
<dbReference type="Pfam" id="PF00032">
    <property type="entry name" value="Cytochrom_B_C"/>
    <property type="match status" value="1"/>
</dbReference>
<dbReference type="Pfam" id="PF00033">
    <property type="entry name" value="Cytochrome_B"/>
    <property type="match status" value="1"/>
</dbReference>
<dbReference type="PIRSF" id="PIRSF038885">
    <property type="entry name" value="COB"/>
    <property type="match status" value="1"/>
</dbReference>
<dbReference type="SUPFAM" id="SSF81648">
    <property type="entry name" value="a domain/subunit of cytochrome bc1 complex (Ubiquinol-cytochrome c reductase)"/>
    <property type="match status" value="1"/>
</dbReference>
<dbReference type="SUPFAM" id="SSF81342">
    <property type="entry name" value="Transmembrane di-heme cytochromes"/>
    <property type="match status" value="1"/>
</dbReference>
<dbReference type="PROSITE" id="PS51003">
    <property type="entry name" value="CYTB_CTER"/>
    <property type="match status" value="1"/>
</dbReference>
<dbReference type="PROSITE" id="PS51002">
    <property type="entry name" value="CYTB_NTER"/>
    <property type="match status" value="1"/>
</dbReference>
<sequence>MTNIRKSHPLIKIINHSFIDLPAPSNISSWWNFGSLLGICLILQILTGLFLAMHYTSDTTTAFSSVTHICRDVNYGWIIRYLHANGASMFFICLFIHVGRGLYYGSYTFLETWNIGIILLLTVMATAFMGYVLPWGQMSFWGATVITNLLSAIPYIGTTLVEWIWGGFSVDKATLTRFFAFHFILPFIITALVIVHLLFLHETGSNNPSGIPSDMDKIPFHPYYTIKDILGLLLLILLLLTLVLFSPDLLGDPDNYTPANPLSTPPHIKPEWYFLFAYAILRSIPNKLGGVLALILSILILALIPTLHTSKQRSMMFRPLSQCVFWLLVADLLTLTWIGGQPVEHPYMIIGQLASILYFSLILIFMPLASTIENNLLKW</sequence>
<keyword id="KW-0249">Electron transport</keyword>
<keyword id="KW-0349">Heme</keyword>
<keyword id="KW-0408">Iron</keyword>
<keyword id="KW-0472">Membrane</keyword>
<keyword id="KW-0479">Metal-binding</keyword>
<keyword id="KW-0496">Mitochondrion</keyword>
<keyword id="KW-0999">Mitochondrion inner membrane</keyword>
<keyword id="KW-0679">Respiratory chain</keyword>
<keyword id="KW-0812">Transmembrane</keyword>
<keyword id="KW-1133">Transmembrane helix</keyword>
<keyword id="KW-0813">Transport</keyword>
<keyword id="KW-0830">Ubiquinone</keyword>
<proteinExistence type="inferred from homology"/>
<geneLocation type="mitochondrion"/>
<evidence type="ECO:0000250" key="1"/>
<evidence type="ECO:0000250" key="2">
    <source>
        <dbReference type="UniProtKB" id="P00157"/>
    </source>
</evidence>
<evidence type="ECO:0000255" key="3">
    <source>
        <dbReference type="PROSITE-ProRule" id="PRU00967"/>
    </source>
</evidence>
<evidence type="ECO:0000255" key="4">
    <source>
        <dbReference type="PROSITE-ProRule" id="PRU00968"/>
    </source>
</evidence>
<protein>
    <recommendedName>
        <fullName>Cytochrome b</fullName>
    </recommendedName>
    <alternativeName>
        <fullName>Complex III subunit 3</fullName>
    </alternativeName>
    <alternativeName>
        <fullName>Complex III subunit III</fullName>
    </alternativeName>
    <alternativeName>
        <fullName>Cytochrome b-c1 complex subunit 3</fullName>
    </alternativeName>
    <alternativeName>
        <fullName>Ubiquinol-cytochrome-c reductase complex cytochrome b subunit</fullName>
    </alternativeName>
</protein>
<name>CYB_EQUGR</name>
<accession>P24956</accession>
<gene>
    <name type="primary">MT-CYB</name>
    <name type="synonym">COB</name>
    <name type="synonym">CYTB</name>
    <name type="synonym">MTCYB</name>
</gene>
<feature type="chain" id="PRO_0000060938" description="Cytochrome b">
    <location>
        <begin position="1"/>
        <end position="379"/>
    </location>
</feature>
<feature type="transmembrane region" description="Helical" evidence="2">
    <location>
        <begin position="33"/>
        <end position="53"/>
    </location>
</feature>
<feature type="transmembrane region" description="Helical" evidence="2">
    <location>
        <begin position="77"/>
        <end position="98"/>
    </location>
</feature>
<feature type="transmembrane region" description="Helical" evidence="2">
    <location>
        <begin position="113"/>
        <end position="133"/>
    </location>
</feature>
<feature type="transmembrane region" description="Helical" evidence="2">
    <location>
        <begin position="178"/>
        <end position="198"/>
    </location>
</feature>
<feature type="transmembrane region" description="Helical" evidence="2">
    <location>
        <begin position="226"/>
        <end position="246"/>
    </location>
</feature>
<feature type="transmembrane region" description="Helical" evidence="2">
    <location>
        <begin position="288"/>
        <end position="308"/>
    </location>
</feature>
<feature type="transmembrane region" description="Helical" evidence="2">
    <location>
        <begin position="320"/>
        <end position="340"/>
    </location>
</feature>
<feature type="transmembrane region" description="Helical" evidence="2">
    <location>
        <begin position="347"/>
        <end position="367"/>
    </location>
</feature>
<feature type="binding site" description="axial binding residue" evidence="2">
    <location>
        <position position="83"/>
    </location>
    <ligand>
        <name>heme b</name>
        <dbReference type="ChEBI" id="CHEBI:60344"/>
        <label>b562</label>
    </ligand>
    <ligandPart>
        <name>Fe</name>
        <dbReference type="ChEBI" id="CHEBI:18248"/>
    </ligandPart>
</feature>
<feature type="binding site" description="axial binding residue" evidence="2">
    <location>
        <position position="97"/>
    </location>
    <ligand>
        <name>heme b</name>
        <dbReference type="ChEBI" id="CHEBI:60344"/>
        <label>b566</label>
    </ligand>
    <ligandPart>
        <name>Fe</name>
        <dbReference type="ChEBI" id="CHEBI:18248"/>
    </ligandPart>
</feature>
<feature type="binding site" description="axial binding residue" evidence="2">
    <location>
        <position position="182"/>
    </location>
    <ligand>
        <name>heme b</name>
        <dbReference type="ChEBI" id="CHEBI:60344"/>
        <label>b562</label>
    </ligand>
    <ligandPart>
        <name>Fe</name>
        <dbReference type="ChEBI" id="CHEBI:18248"/>
    </ligandPart>
</feature>
<feature type="binding site" description="axial binding residue" evidence="2">
    <location>
        <position position="196"/>
    </location>
    <ligand>
        <name>heme b</name>
        <dbReference type="ChEBI" id="CHEBI:60344"/>
        <label>b566</label>
    </ligand>
    <ligandPart>
        <name>Fe</name>
        <dbReference type="ChEBI" id="CHEBI:18248"/>
    </ligandPart>
</feature>
<feature type="binding site" evidence="2">
    <location>
        <position position="201"/>
    </location>
    <ligand>
        <name>a ubiquinone</name>
        <dbReference type="ChEBI" id="CHEBI:16389"/>
    </ligand>
</feature>
<comment type="function">
    <text evidence="2">Component of the ubiquinol-cytochrome c reductase complex (complex III or cytochrome b-c1 complex) that is part of the mitochondrial respiratory chain. The b-c1 complex mediates electron transfer from ubiquinol to cytochrome c. Contributes to the generation of a proton gradient across the mitochondrial membrane that is then used for ATP synthesis.</text>
</comment>
<comment type="cofactor">
    <cofactor evidence="2">
        <name>heme b</name>
        <dbReference type="ChEBI" id="CHEBI:60344"/>
    </cofactor>
    <text evidence="2">Binds 2 heme b groups non-covalently.</text>
</comment>
<comment type="subunit">
    <text evidence="2">The cytochrome bc1 complex contains 11 subunits: 3 respiratory subunits (MT-CYB, CYC1 and UQCRFS1), 2 core proteins (UQCRC1 and UQCRC2) and 6 low-molecular weight proteins (UQCRH/QCR6, UQCRB/QCR7, UQCRQ/QCR8, UQCR10/QCR9, UQCR11/QCR10 and a cleavage product of UQCRFS1). This cytochrome bc1 complex then forms a dimer.</text>
</comment>
<comment type="subcellular location">
    <subcellularLocation>
        <location evidence="2">Mitochondrion inner membrane</location>
        <topology evidence="2">Multi-pass membrane protein</topology>
    </subcellularLocation>
</comment>
<comment type="miscellaneous">
    <text evidence="1">Heme 1 (or BL or b562) is low-potential and absorbs at about 562 nm, and heme 2 (or BH or b566) is high-potential and absorbs at about 566 nm.</text>
</comment>
<comment type="similarity">
    <text evidence="3 4">Belongs to the cytochrome b family.</text>
</comment>
<comment type="caution">
    <text evidence="2">The full-length protein contains only eight transmembrane helices, not nine as predicted by bioinformatics tools.</text>
</comment>